<name>MDM34_NEOFI</name>
<evidence type="ECO:0000255" key="1">
    <source>
        <dbReference type="HAMAP-Rule" id="MF_03105"/>
    </source>
</evidence>
<evidence type="ECO:0000256" key="2">
    <source>
        <dbReference type="SAM" id="MobiDB-lite"/>
    </source>
</evidence>
<comment type="function">
    <text evidence="1">Component of the ERMES/MDM complex, which serves as a molecular tether to connect the endoplasmic reticulum (ER) and mitochondria. Components of this complex are involved in the control of mitochondrial shape and protein biogenesis, and function in nonvesicular lipid trafficking between the ER and mitochondria. Mdm34 is required for the interaction of the ER-resident membrane protein mmm1 and the outer mitochondrial membrane-resident beta-barrel protein mdm10.</text>
</comment>
<comment type="subunit">
    <text evidence="1">Component of the ER-mitochondria encounter structure (ERMES) or MDM complex, composed of mmm1, mdm10, mdm12 and mdm34.</text>
</comment>
<comment type="subcellular location">
    <subcellularLocation>
        <location evidence="1">Mitochondrion outer membrane</location>
        <topology evidence="1">Multi-pass membrane protein</topology>
    </subcellularLocation>
    <text evidence="1">The ERMES/MDM complex localizes to a few discrete foci (around 10 per single cell), that represent mitochondria-endoplasmic reticulum junctions. These foci are often found next to mtDNA nucleoids.</text>
</comment>
<comment type="domain">
    <text evidence="1">Lacks alpha-helical transmembrane segments, suggesting that it resides in the membrane via beta-sheet conformations similar to those predicted for other outer membrane proteins and porin.</text>
</comment>
<comment type="domain">
    <text evidence="1">The SMP-LTD domain is a barrel-like domain that can bind various types of glycerophospholipids in its interior and mediate their transfer between two adjacent bilayers.</text>
</comment>
<comment type="similarity">
    <text evidence="1">Belongs to the MDM34 family.</text>
</comment>
<gene>
    <name evidence="1" type="primary">mdm34</name>
    <name type="ORF">NFIA_106090</name>
</gene>
<feature type="chain" id="PRO_0000384350" description="Mitochondrial distribution and morphology protein 34">
    <location>
        <begin position="1"/>
        <end position="572"/>
    </location>
</feature>
<feature type="domain" description="SMP-LTD" evidence="1">
    <location>
        <begin position="1"/>
        <end position="195"/>
    </location>
</feature>
<feature type="region of interest" description="Disordered" evidence="2">
    <location>
        <begin position="208"/>
        <end position="236"/>
    </location>
</feature>
<feature type="region of interest" description="Disordered" evidence="2">
    <location>
        <begin position="296"/>
        <end position="405"/>
    </location>
</feature>
<feature type="region of interest" description="Disordered" evidence="2">
    <location>
        <begin position="455"/>
        <end position="518"/>
    </location>
</feature>
<feature type="region of interest" description="Disordered" evidence="2">
    <location>
        <begin position="551"/>
        <end position="572"/>
    </location>
</feature>
<feature type="compositionally biased region" description="Polar residues" evidence="2">
    <location>
        <begin position="296"/>
        <end position="347"/>
    </location>
</feature>
<feature type="compositionally biased region" description="Basic residues" evidence="2">
    <location>
        <begin position="358"/>
        <end position="370"/>
    </location>
</feature>
<feature type="compositionally biased region" description="Basic and acidic residues" evidence="2">
    <location>
        <begin position="371"/>
        <end position="381"/>
    </location>
</feature>
<feature type="compositionally biased region" description="Polar residues" evidence="2">
    <location>
        <begin position="387"/>
        <end position="401"/>
    </location>
</feature>
<feature type="compositionally biased region" description="Polar residues" evidence="2">
    <location>
        <begin position="498"/>
        <end position="511"/>
    </location>
</feature>
<organism>
    <name type="scientific">Neosartorya fischeri (strain ATCC 1020 / DSM 3700 / CBS 544.65 / FGSC A1164 / JCM 1740 / NRRL 181 / WB 181)</name>
    <name type="common">Aspergillus fischerianus</name>
    <dbReference type="NCBI Taxonomy" id="331117"/>
    <lineage>
        <taxon>Eukaryota</taxon>
        <taxon>Fungi</taxon>
        <taxon>Dikarya</taxon>
        <taxon>Ascomycota</taxon>
        <taxon>Pezizomycotina</taxon>
        <taxon>Eurotiomycetes</taxon>
        <taxon>Eurotiomycetidae</taxon>
        <taxon>Eurotiales</taxon>
        <taxon>Aspergillaceae</taxon>
        <taxon>Aspergillus</taxon>
        <taxon>Aspergillus subgen. Fumigati</taxon>
    </lineage>
</organism>
<accession>A1CWW9</accession>
<keyword id="KW-0445">Lipid transport</keyword>
<keyword id="KW-0446">Lipid-binding</keyword>
<keyword id="KW-0472">Membrane</keyword>
<keyword id="KW-0496">Mitochondrion</keyword>
<keyword id="KW-1000">Mitochondrion outer membrane</keyword>
<keyword id="KW-1185">Reference proteome</keyword>
<keyword id="KW-0812">Transmembrane</keyword>
<keyword id="KW-1134">Transmembrane beta strand</keyword>
<keyword id="KW-0813">Transport</keyword>
<sequence>MAFNFNWSPLMADASFYTRAQDLLTAALNKSPKPPIIVDDIIVTELNLGSIPPELEILEIGDLAEDRFRGIFKMSYSGDAFLTLKTRVQANPLNTYLLTRPSFATPRPLAAATPLTIPLQITLSDFKLSGFVILVFSKQKGITVVFRNDPLESLKVSSTFDSIPFVRDFLQKEIEAQLRILFMDELPAIIHRLSLRLWVPEYRAGEELQTQTESANGEGPGQDPLASPPQDPVDALGNALNESEIESLSLDSSVETHSLFSQKNLLRLAALTDSQRTLSLFTPSIREVVYRAWTSPSDQTDASGGVTSPFSPVLSRTQSQVGSMSSFPDSASMVSNQSRSSTPSHTFSGYGLSLGAGRHSKAHARKRKKRVVDLRRPKTTDDAPSVSDESAFTESTSTPSICSAPMPVLDEQTDDPVTPPLSPDRDLHLPAIPERHGMSISRPALRREIASEMIRDTAESKPSSNPVGQAIQDEDLSATPRAAVRAHGASVLEKEKQATGSSAGSSRQLPSTILPFINDSPTGRVVDQALVERLAGEIARRMRDEKFLASNACGPFWDRHSQEESPPPAYGH</sequence>
<proteinExistence type="inferred from homology"/>
<reference key="1">
    <citation type="journal article" date="2008" name="PLoS Genet.">
        <title>Genomic islands in the pathogenic filamentous fungus Aspergillus fumigatus.</title>
        <authorList>
            <person name="Fedorova N.D."/>
            <person name="Khaldi N."/>
            <person name="Joardar V.S."/>
            <person name="Maiti R."/>
            <person name="Amedeo P."/>
            <person name="Anderson M.J."/>
            <person name="Crabtree J."/>
            <person name="Silva J.C."/>
            <person name="Badger J.H."/>
            <person name="Albarraq A."/>
            <person name="Angiuoli S."/>
            <person name="Bussey H."/>
            <person name="Bowyer P."/>
            <person name="Cotty P.J."/>
            <person name="Dyer P.S."/>
            <person name="Egan A."/>
            <person name="Galens K."/>
            <person name="Fraser-Liggett C.M."/>
            <person name="Haas B.J."/>
            <person name="Inman J.M."/>
            <person name="Kent R."/>
            <person name="Lemieux S."/>
            <person name="Malavazi I."/>
            <person name="Orvis J."/>
            <person name="Roemer T."/>
            <person name="Ronning C.M."/>
            <person name="Sundaram J.P."/>
            <person name="Sutton G."/>
            <person name="Turner G."/>
            <person name="Venter J.C."/>
            <person name="White O.R."/>
            <person name="Whitty B.R."/>
            <person name="Youngman P."/>
            <person name="Wolfe K.H."/>
            <person name="Goldman G.H."/>
            <person name="Wortman J.R."/>
            <person name="Jiang B."/>
            <person name="Denning D.W."/>
            <person name="Nierman W.C."/>
        </authorList>
    </citation>
    <scope>NUCLEOTIDE SEQUENCE [LARGE SCALE GENOMIC DNA]</scope>
    <source>
        <strain>ATCC 1020 / DSM 3700 / CBS 544.65 / FGSC A1164 / JCM 1740 / NRRL 181 / WB 181</strain>
    </source>
</reference>
<dbReference type="EMBL" id="DS027685">
    <property type="protein sequence ID" value="EAW25121.1"/>
    <property type="molecule type" value="Genomic_DNA"/>
</dbReference>
<dbReference type="RefSeq" id="XP_001267018.1">
    <property type="nucleotide sequence ID" value="XM_001267017.1"/>
</dbReference>
<dbReference type="SMR" id="A1CWW9"/>
<dbReference type="STRING" id="331117.A1CWW9"/>
<dbReference type="EnsemblFungi" id="EAW25121">
    <property type="protein sequence ID" value="EAW25121"/>
    <property type="gene ID" value="NFIA_106090"/>
</dbReference>
<dbReference type="GeneID" id="4593738"/>
<dbReference type="KEGG" id="nfi:NFIA_106090"/>
<dbReference type="VEuPathDB" id="FungiDB:NFIA_106090"/>
<dbReference type="eggNOG" id="ENOG502QT3W">
    <property type="taxonomic scope" value="Eukaryota"/>
</dbReference>
<dbReference type="HOGENOM" id="CLU_036502_1_0_1"/>
<dbReference type="OMA" id="VFRAWSG"/>
<dbReference type="OrthoDB" id="17927at2759"/>
<dbReference type="Proteomes" id="UP000006702">
    <property type="component" value="Unassembled WGS sequence"/>
</dbReference>
<dbReference type="GO" id="GO:0032865">
    <property type="term" value="C:ERMES complex"/>
    <property type="evidence" value="ECO:0007669"/>
    <property type="project" value="UniProtKB-UniRule"/>
</dbReference>
<dbReference type="GO" id="GO:0008289">
    <property type="term" value="F:lipid binding"/>
    <property type="evidence" value="ECO:0007669"/>
    <property type="project" value="UniProtKB-KW"/>
</dbReference>
<dbReference type="GO" id="GO:0000002">
    <property type="term" value="P:mitochondrial genome maintenance"/>
    <property type="evidence" value="ECO:0007669"/>
    <property type="project" value="UniProtKB-UniRule"/>
</dbReference>
<dbReference type="GO" id="GO:1990456">
    <property type="term" value="P:mitochondrion-endoplasmic reticulum membrane tethering"/>
    <property type="evidence" value="ECO:0007669"/>
    <property type="project" value="TreeGrafter"/>
</dbReference>
<dbReference type="GO" id="GO:0015914">
    <property type="term" value="P:phospholipid transport"/>
    <property type="evidence" value="ECO:0007669"/>
    <property type="project" value="TreeGrafter"/>
</dbReference>
<dbReference type="CDD" id="cd21673">
    <property type="entry name" value="SMP_Mdm34"/>
    <property type="match status" value="1"/>
</dbReference>
<dbReference type="HAMAP" id="MF_03105">
    <property type="entry name" value="Mdm34"/>
    <property type="match status" value="1"/>
</dbReference>
<dbReference type="InterPro" id="IPR027536">
    <property type="entry name" value="Mdm34"/>
</dbReference>
<dbReference type="InterPro" id="IPR031468">
    <property type="entry name" value="SMP_LBD"/>
</dbReference>
<dbReference type="PANTHER" id="PTHR28185">
    <property type="entry name" value="MITOCHONDRIAL DISTRIBUTION AND MORPHOLOGY PROTEIN 34"/>
    <property type="match status" value="1"/>
</dbReference>
<dbReference type="PANTHER" id="PTHR28185:SF1">
    <property type="entry name" value="MITOCHONDRIAL DISTRIBUTION AND MORPHOLOGY PROTEIN 34"/>
    <property type="match status" value="1"/>
</dbReference>
<dbReference type="PROSITE" id="PS51847">
    <property type="entry name" value="SMP"/>
    <property type="match status" value="1"/>
</dbReference>
<protein>
    <recommendedName>
        <fullName evidence="1">Mitochondrial distribution and morphology protein 34</fullName>
    </recommendedName>
</protein>